<reference key="1">
    <citation type="journal article" date="1998" name="Nature">
        <title>The genome sequence of Rickettsia prowazekii and the origin of mitochondria.</title>
        <authorList>
            <person name="Andersson S.G.E."/>
            <person name="Zomorodipour A."/>
            <person name="Andersson J.O."/>
            <person name="Sicheritz-Ponten T."/>
            <person name="Alsmark U.C.M."/>
            <person name="Podowski R.M."/>
            <person name="Naeslund A.K."/>
            <person name="Eriksson A.-S."/>
            <person name="Winkler H.H."/>
            <person name="Kurland C.G."/>
        </authorList>
    </citation>
    <scope>NUCLEOTIDE SEQUENCE [LARGE SCALE GENOMIC DNA]</scope>
    <source>
        <strain>Madrid E</strain>
    </source>
</reference>
<gene>
    <name type="ordered locus">RP005</name>
</gene>
<protein>
    <recommendedName>
        <fullName>Uncharacterized protein RP005</fullName>
    </recommendedName>
</protein>
<dbReference type="EMBL" id="AJ235270">
    <property type="protein sequence ID" value="CAA14478.1"/>
    <property type="molecule type" value="Genomic_DNA"/>
</dbReference>
<dbReference type="PIR" id="G71707">
    <property type="entry name" value="G71707"/>
</dbReference>
<dbReference type="RefSeq" id="NP_220401.1">
    <property type="nucleotide sequence ID" value="NC_000963.1"/>
</dbReference>
<dbReference type="STRING" id="272947.gene:17555088"/>
<dbReference type="EnsemblBacteria" id="CAA14478">
    <property type="protein sequence ID" value="CAA14478"/>
    <property type="gene ID" value="CAA14478"/>
</dbReference>
<dbReference type="KEGG" id="rpr:RP005"/>
<dbReference type="PATRIC" id="fig|272947.5.peg.5"/>
<dbReference type="eggNOG" id="COG0493">
    <property type="taxonomic scope" value="Bacteria"/>
</dbReference>
<dbReference type="HOGENOM" id="CLU_899807_0_0_5"/>
<dbReference type="OrthoDB" id="10017993at2"/>
<dbReference type="Proteomes" id="UP000002480">
    <property type="component" value="Chromosome"/>
</dbReference>
<feature type="chain" id="PRO_0000101294" description="Uncharacterized protein RP005">
    <location>
        <begin position="1"/>
        <end position="295"/>
    </location>
</feature>
<name>Y005_RICPR</name>
<sequence>MKLGFNLDFNELDLTGLKKLDQIFLDYLFKADKSLHKDLMLFRATPLSIIPQDYSKFLLKISPHLDDFLAELFCISKEVTISRLKHKDFDIIYECKRKFVQRVAVKKYPLEKIKDIDFEDVYLKITNLIGTNFTSREFAKQIVIWQQDEESFSLELDIAARYAAYRVFSYYNSLSSWNKNLFLQNDILFNLQQKLDKKNLIDDKKILKYQKNERVDFDYKDSFFNLDEALNNSHYCIYCHKRDKDSCSKGFDVIPHFDRVISVDKIPRLSYRMTTGCPLKQKISEMNYIKAQVLI</sequence>
<organism>
    <name type="scientific">Rickettsia prowazekii (strain Madrid E)</name>
    <dbReference type="NCBI Taxonomy" id="272947"/>
    <lineage>
        <taxon>Bacteria</taxon>
        <taxon>Pseudomonadati</taxon>
        <taxon>Pseudomonadota</taxon>
        <taxon>Alphaproteobacteria</taxon>
        <taxon>Rickettsiales</taxon>
        <taxon>Rickettsiaceae</taxon>
        <taxon>Rickettsieae</taxon>
        <taxon>Rickettsia</taxon>
        <taxon>typhus group</taxon>
    </lineage>
</organism>
<accession>Q9ZED7</accession>
<keyword id="KW-1185">Reference proteome</keyword>
<proteinExistence type="predicted"/>